<accession>P85794</accession>
<dbReference type="GO" id="GO:0005576">
    <property type="term" value="C:extracellular region"/>
    <property type="evidence" value="ECO:0007669"/>
    <property type="project" value="UniProtKB-SubCell"/>
</dbReference>
<dbReference type="GO" id="GO:0007218">
    <property type="term" value="P:neuropeptide signaling pathway"/>
    <property type="evidence" value="ECO:0007669"/>
    <property type="project" value="UniProtKB-KW"/>
</dbReference>
<dbReference type="InterPro" id="IPR013231">
    <property type="entry name" value="Periviscerokinin"/>
</dbReference>
<dbReference type="Pfam" id="PF08259">
    <property type="entry name" value="Periviscerokin"/>
    <property type="match status" value="1"/>
</dbReference>
<sequence>GSSGLISMPRV</sequence>
<evidence type="ECO:0000255" key="1"/>
<evidence type="ECO:0000269" key="2">
    <source>
    </source>
</evidence>
<evidence type="ECO:0000303" key="3">
    <source>
    </source>
</evidence>
<evidence type="ECO:0000305" key="4"/>
<feature type="peptide" id="PRO_0000378793" description="Periviscerokinin-2" evidence="2">
    <location>
        <begin position="1"/>
        <end position="11"/>
    </location>
</feature>
<feature type="modified residue" description="Valine amide" evidence="2">
    <location>
        <position position="11"/>
    </location>
</feature>
<comment type="function">
    <text evidence="4">Mediates visceral muscle contractile activity (myotropic activity).</text>
</comment>
<comment type="subcellular location">
    <subcellularLocation>
        <location evidence="4">Secreted</location>
    </subcellularLocation>
</comment>
<comment type="similarity">
    <text evidence="1">Belongs to the periviscerokinin family.</text>
</comment>
<name>PVK2_HOSCA</name>
<reference evidence="4" key="1">
    <citation type="journal article" date="2009" name="BMC Evol. Biol.">
        <title>A proteomic approach for studying insect phylogeny: CAPA peptides of ancient insect taxa (Dictyoptera, Blattoptera) as a test case.</title>
        <authorList>
            <person name="Roth S."/>
            <person name="Fromm B."/>
            <person name="Gaede G."/>
            <person name="Predel R."/>
        </authorList>
    </citation>
    <scope>PROTEIN SEQUENCE</scope>
    <scope>AMIDATION AT VAL-11</scope>
    <source>
        <tissue evidence="2">Abdominal perisympathetic organs</tissue>
    </source>
</reference>
<proteinExistence type="evidence at protein level"/>
<protein>
    <recommendedName>
        <fullName evidence="3">Periviscerokinin-2</fullName>
        <shortName evidence="3">HosCa-PVK-2</shortName>
    </recommendedName>
</protein>
<keyword id="KW-0027">Amidation</keyword>
<keyword id="KW-0903">Direct protein sequencing</keyword>
<keyword id="KW-0527">Neuropeptide</keyword>
<keyword id="KW-0964">Secreted</keyword>
<organism>
    <name type="scientific">Hostilia carinata</name>
    <name type="common">Cockroach</name>
    <dbReference type="NCBI Taxonomy" id="645593"/>
    <lineage>
        <taxon>Eukaryota</taxon>
        <taxon>Metazoa</taxon>
        <taxon>Ecdysozoa</taxon>
        <taxon>Arthropoda</taxon>
        <taxon>Hexapoda</taxon>
        <taxon>Insecta</taxon>
        <taxon>Pterygota</taxon>
        <taxon>Neoptera</taxon>
        <taxon>Polyneoptera</taxon>
        <taxon>Dictyoptera</taxon>
        <taxon>Blattodea</taxon>
        <taxon>Blaberoidea</taxon>
        <taxon>Blaberidae</taxon>
        <taxon>Perisphaerinae</taxon>
        <taxon>Hostilia</taxon>
    </lineage>
</organism>